<name>VPS53_PONAB</name>
<feature type="chain" id="PRO_0000215191" description="Vacuolar protein sorting-associated protein 53 homolog">
    <location>
        <begin position="1"/>
        <end position="832"/>
    </location>
</feature>
<feature type="region of interest" description="Disordered" evidence="3">
    <location>
        <begin position="373"/>
        <end position="412"/>
    </location>
</feature>
<feature type="region of interest" description="Disordered" evidence="3">
    <location>
        <begin position="794"/>
        <end position="822"/>
    </location>
</feature>
<feature type="coiled-coil region" evidence="2">
    <location>
        <begin position="97"/>
        <end position="138"/>
    </location>
</feature>
<feature type="compositionally biased region" description="Acidic residues" evidence="3">
    <location>
        <begin position="386"/>
        <end position="397"/>
    </location>
</feature>
<feature type="compositionally biased region" description="Basic and acidic residues" evidence="3">
    <location>
        <begin position="398"/>
        <end position="412"/>
    </location>
</feature>
<feature type="compositionally biased region" description="Low complexity" evidence="3">
    <location>
        <begin position="799"/>
        <end position="809"/>
    </location>
</feature>
<feature type="modified residue" description="N6-acetyllysine" evidence="1">
    <location>
        <position position="110"/>
    </location>
</feature>
<feature type="modified residue" description="N6-acetyllysine" evidence="1">
    <location>
        <position position="360"/>
    </location>
</feature>
<feature type="modified residue" description="Phosphoserine" evidence="1">
    <location>
        <position position="377"/>
    </location>
</feature>
<feature type="modified residue" description="Phosphothreonine" evidence="1">
    <location>
        <position position="391"/>
    </location>
</feature>
<feature type="modified residue" description="Phosphoserine" evidence="1">
    <location>
        <position position="580"/>
    </location>
</feature>
<feature type="splice variant" id="VSP_060666" description="In isoform 2.">
    <original>LLLD</original>
    <variation>VRWT</variation>
    <location>
        <begin position="696"/>
        <end position="699"/>
    </location>
</feature>
<feature type="splice variant" id="VSP_060667" description="In isoform 2.">
    <location>
        <begin position="700"/>
        <end position="832"/>
    </location>
</feature>
<organism>
    <name type="scientific">Pongo abelii</name>
    <name type="common">Sumatran orangutan</name>
    <name type="synonym">Pongo pygmaeus abelii</name>
    <dbReference type="NCBI Taxonomy" id="9601"/>
    <lineage>
        <taxon>Eukaryota</taxon>
        <taxon>Metazoa</taxon>
        <taxon>Chordata</taxon>
        <taxon>Craniata</taxon>
        <taxon>Vertebrata</taxon>
        <taxon>Euteleostomi</taxon>
        <taxon>Mammalia</taxon>
        <taxon>Eutheria</taxon>
        <taxon>Euarchontoglires</taxon>
        <taxon>Primates</taxon>
        <taxon>Haplorrhini</taxon>
        <taxon>Catarrhini</taxon>
        <taxon>Hominidae</taxon>
        <taxon>Pongo</taxon>
    </lineage>
</organism>
<dbReference type="EMBL" id="CR860864">
    <property type="protein sequence ID" value="CAH92972.1"/>
    <property type="molecule type" value="mRNA"/>
</dbReference>
<dbReference type="EMBL" id="NDHI03003557">
    <property type="protein sequence ID" value="PNJ22341.1"/>
    <property type="molecule type" value="Genomic_DNA"/>
</dbReference>
<dbReference type="RefSeq" id="NP_001126755.1">
    <molecule id="Q5R5J4-2"/>
    <property type="nucleotide sequence ID" value="NM_001133283.1"/>
</dbReference>
<dbReference type="SMR" id="Q5R5J4"/>
<dbReference type="FunCoup" id="Q5R5J4">
    <property type="interactions" value="3283"/>
</dbReference>
<dbReference type="STRING" id="9601.ENSPPYP00000008741"/>
<dbReference type="Ensembl" id="ENSPPYT00000009098.2">
    <molecule id="Q5R5J4-1"/>
    <property type="protein sequence ID" value="ENSPPYP00000008741.2"/>
    <property type="gene ID" value="ENSPPYG00000007757.2"/>
</dbReference>
<dbReference type="GeneID" id="100173757"/>
<dbReference type="KEGG" id="pon:100173757"/>
<dbReference type="CTD" id="55275"/>
<dbReference type="eggNOG" id="KOG2180">
    <property type="taxonomic scope" value="Eukaryota"/>
</dbReference>
<dbReference type="GeneTree" id="ENSGT00390000015165"/>
<dbReference type="InParanoid" id="Q5R5J4"/>
<dbReference type="OMA" id="YKFAEAK"/>
<dbReference type="OrthoDB" id="10261632at2759"/>
<dbReference type="Proteomes" id="UP000001595">
    <property type="component" value="Chromosome 17"/>
</dbReference>
<dbReference type="GO" id="GO:0005829">
    <property type="term" value="C:cytosol"/>
    <property type="evidence" value="ECO:0007669"/>
    <property type="project" value="Ensembl"/>
</dbReference>
<dbReference type="GO" id="GO:1990745">
    <property type="term" value="C:EARP complex"/>
    <property type="evidence" value="ECO:0000250"/>
    <property type="project" value="UniProtKB"/>
</dbReference>
<dbReference type="GO" id="GO:0010008">
    <property type="term" value="C:endosome membrane"/>
    <property type="evidence" value="ECO:0007669"/>
    <property type="project" value="UniProtKB-SubCell"/>
</dbReference>
<dbReference type="GO" id="GO:0000938">
    <property type="term" value="C:GARP complex"/>
    <property type="evidence" value="ECO:0007669"/>
    <property type="project" value="Ensembl"/>
</dbReference>
<dbReference type="GO" id="GO:0048471">
    <property type="term" value="C:perinuclear region of cytoplasm"/>
    <property type="evidence" value="ECO:0007669"/>
    <property type="project" value="Ensembl"/>
</dbReference>
<dbReference type="GO" id="GO:0055037">
    <property type="term" value="C:recycling endosome"/>
    <property type="evidence" value="ECO:0000250"/>
    <property type="project" value="UniProtKB"/>
</dbReference>
<dbReference type="GO" id="GO:0032456">
    <property type="term" value="P:endocytic recycling"/>
    <property type="evidence" value="ECO:0000250"/>
    <property type="project" value="UniProtKB"/>
</dbReference>
<dbReference type="GO" id="GO:0006622">
    <property type="term" value="P:protein targeting to lysosome"/>
    <property type="evidence" value="ECO:0007669"/>
    <property type="project" value="Ensembl"/>
</dbReference>
<dbReference type="GO" id="GO:0042147">
    <property type="term" value="P:retrograde transport, endosome to Golgi"/>
    <property type="evidence" value="ECO:0000250"/>
    <property type="project" value="UniProtKB"/>
</dbReference>
<dbReference type="GO" id="GO:0090119">
    <property type="term" value="P:vesicle-mediated cholesterol transport"/>
    <property type="evidence" value="ECO:0007669"/>
    <property type="project" value="Ensembl"/>
</dbReference>
<dbReference type="FunFam" id="1.10.357.110:FF:000001">
    <property type="entry name" value="vacuolar protein sorting-associated protein 53 homolog"/>
    <property type="match status" value="1"/>
</dbReference>
<dbReference type="Gene3D" id="1.10.287.950">
    <property type="entry name" value="Methyl-accepting chemotaxis protein"/>
    <property type="match status" value="1"/>
</dbReference>
<dbReference type="Gene3D" id="1.10.357.110">
    <property type="entry name" value="Vacuolar protein sorting-associated protein 53, C-terminus"/>
    <property type="match status" value="1"/>
</dbReference>
<dbReference type="InterPro" id="IPR039766">
    <property type="entry name" value="Vps53"/>
</dbReference>
<dbReference type="InterPro" id="IPR031745">
    <property type="entry name" value="Vps53_C"/>
</dbReference>
<dbReference type="InterPro" id="IPR038260">
    <property type="entry name" value="Vps53_C_sf"/>
</dbReference>
<dbReference type="InterPro" id="IPR007234">
    <property type="entry name" value="Vps53_N"/>
</dbReference>
<dbReference type="PANTHER" id="PTHR12820:SF0">
    <property type="entry name" value="VACUOLAR PROTEIN SORTING-ASSOCIATED PROTEIN 53 HOMOLOG"/>
    <property type="match status" value="1"/>
</dbReference>
<dbReference type="PANTHER" id="PTHR12820">
    <property type="entry name" value="VACUOLAR SORTING PROTEIN 53"/>
    <property type="match status" value="1"/>
</dbReference>
<dbReference type="Pfam" id="PF16854">
    <property type="entry name" value="VPS53_C"/>
    <property type="match status" value="1"/>
</dbReference>
<dbReference type="Pfam" id="PF04100">
    <property type="entry name" value="Vps53_N"/>
    <property type="match status" value="1"/>
</dbReference>
<proteinExistence type="evidence at transcript level"/>
<gene>
    <name type="primary">VPS53</name>
</gene>
<accession>Q5R5J4</accession>
<accession>A0A2J8SNJ1</accession>
<protein>
    <recommendedName>
        <fullName>Vacuolar protein sorting-associated protein 53 homolog</fullName>
    </recommendedName>
</protein>
<keyword id="KW-0007">Acetylation</keyword>
<keyword id="KW-0025">Alternative splicing</keyword>
<keyword id="KW-0175">Coiled coil</keyword>
<keyword id="KW-0967">Endosome</keyword>
<keyword id="KW-0333">Golgi apparatus</keyword>
<keyword id="KW-0472">Membrane</keyword>
<keyword id="KW-0597">Phosphoprotein</keyword>
<keyword id="KW-0653">Protein transport</keyword>
<keyword id="KW-1185">Reference proteome</keyword>
<keyword id="KW-0813">Transport</keyword>
<reference key="1">
    <citation type="submission" date="2004-11" db="EMBL/GenBank/DDBJ databases">
        <authorList>
            <consortium name="The German cDNA consortium"/>
        </authorList>
    </citation>
    <scope>NUCLEOTIDE SEQUENCE [LARGE SCALE MRNA] (ISOFORM 2)</scope>
    <source>
        <tissue>Kidney</tissue>
    </source>
</reference>
<reference evidence="5" key="2">
    <citation type="submission" date="2017-12" db="EMBL/GenBank/DDBJ databases">
        <title>High-resolution comparative analysis of great ape genomes.</title>
        <authorList>
            <person name="Pollen A."/>
            <person name="Hastie A."/>
            <person name="Hormozdiari F."/>
            <person name="Dougherty M."/>
            <person name="Liu R."/>
            <person name="Chaisson M."/>
            <person name="Hoppe E."/>
            <person name="Hill C."/>
            <person name="Pang A."/>
            <person name="Hillier L."/>
            <person name="Baker C."/>
            <person name="Armstrong J."/>
            <person name="Shendure J."/>
            <person name="Paten B."/>
            <person name="Wilson R."/>
            <person name="Chao H."/>
            <person name="Schneider V."/>
            <person name="Ventura M."/>
            <person name="Kronenberg Z."/>
            <person name="Murali S."/>
            <person name="Gordon D."/>
            <person name="Cantsilieris S."/>
            <person name="Munson K."/>
            <person name="Nelson B."/>
            <person name="Raja A."/>
            <person name="Underwood J."/>
            <person name="Diekhans M."/>
            <person name="Fiddes I."/>
            <person name="Haussler D."/>
            <person name="Eichler E."/>
        </authorList>
    </citation>
    <scope>NUCLEOTIDE SEQUENCE [LARGE SCALE GENOMIC DNA]</scope>
</reference>
<comment type="function">
    <text evidence="1">Acts as a component of the GARP complex that is involved in retrograde transport from early and late endosomes to the trans-Golgi network (TGN). The GARP complex is required for the maintenance of the cycling of mannose 6-phosphate receptors between the TGN and endosomes, this cycling is necessary for proper lysosomal sorting of acid hydrolases such as CTSD. Acts as a component of the EARP complex that is involved in endocytic recycling. The EARP complex associates with Rab4-positive endosomes and promotes recycling of internalized transferrin receptor (TFRC) to the plasma membrane.</text>
</comment>
<comment type="subunit">
    <text evidence="1">Component of the Golgi-associated retrograde protein (GARP) complex, also called VFT (VPS fifty-three) complex, composed of VPS51, VPS52, VPS53 and VPS54 (By similarity). Component of the endosome-associated retrograde protein (EARP) complex, composed of VPS51, VPS52, VPS53 and VPS50/Syndetin (By similarity). EIPR1 interacts with both EARP and GARP complexes and mediates the recruitment of the GARP complex to the trans-Golgi network (By similarity). Interacts with VPS50 in an EIPR1-independent manner (By similarity).</text>
</comment>
<comment type="subcellular location">
    <subcellularLocation>
        <location evidence="1">Golgi apparatus</location>
        <location evidence="1">trans-Golgi network membrane</location>
        <topology evidence="1">Peripheral membrane protein</topology>
    </subcellularLocation>
    <subcellularLocation>
        <location evidence="1">Endosome membrane</location>
        <topology evidence="1">Peripheral membrane protein</topology>
    </subcellularLocation>
    <subcellularLocation>
        <location evidence="1">Recycling endosome</location>
    </subcellularLocation>
    <text evidence="1">Localizes to the trans-Golgi network as part of the GARP complex, while it localizes to recycling endosomes as part of the EARP complex.</text>
</comment>
<comment type="alternative products">
    <event type="alternative splicing"/>
    <isoform>
        <id>Q5R5J4-1</id>
        <name>1</name>
        <sequence type="displayed"/>
    </isoform>
    <isoform>
        <id>Q5R5J4-2</id>
        <name>2</name>
        <sequence type="described" ref="VSP_060666 VSP_060667"/>
    </isoform>
</comment>
<comment type="similarity">
    <text evidence="4">Belongs to the VPS53 family.</text>
</comment>
<sequence>MMEEEELEFVEELEAVLQLTPEVQLAIEQVFPSQDPLDRADFNAVEYINTLFPTEQSLANIDEVVNKIRLKIRRLDDNIRTVVRGQTNVGQDGRQALEEAQKAIQQLFGKIKDIKDKAEKSEQMVKEITRDIKQLDHAKRHLTTSITTLNHLHMLAGGVDSLEAMTRRRQYGEVANLLQGVMNVLEHFHKYMGIPQIRQLSERVKAAQTELGQQILADFEEAFPSQGTKRPGGPSNVLRDACLVANILDPRIKQEIIKKFIKQHLSEYLVLFQENQDVAWLDKIDRRYAWIKRQLVDYEEKYGRMFPREWCMAERIAVEFCHVTRTELAKIMRTRAKEIEVKLLLFAIQRTTNFEGFLAKRFSGCTLTDGTLKKLESPPPSTNPFLEDEPTPEMEELATEKGDLDQPKKPKAPDNPFHGIVSKCFEPHLYVYIESQDKNLGELIDRFVADFKAQGPPKPNTDEGGAVLPSCADLFVYYKKCMVQCSQLSTGEPMIALTTIFQKYLREYAWKILSGNLPKTTTSSGGLTISSLLKEKEGSEVAKFTLEELCLICSILSTAEYCLATTQQLEEKLKEKVDVSLIERINLTGEMDTFSTVISSSIQLLVQDLDAACDPALTAMSKMQWQNVEHVGDQSPYVTSVILHIKQNVPIIRDNLASTRKYFTQFCIKFANSFIPKFITHLFKCKPISMVGAEQLLLDTHSLKMVLLDLPSIGSQVVRKAPASYTKIVVKGMTRAEMILKVVMAPHEPLVVFVDNYIKLLTDCNTETFQKILDMKGLKRSEQSSMLELLRQRLPAPPSGAESSGSLSLMAPTPEQESSRIRKLEKLIKKRL</sequence>
<evidence type="ECO:0000250" key="1">
    <source>
        <dbReference type="UniProtKB" id="Q5VIR6"/>
    </source>
</evidence>
<evidence type="ECO:0000255" key="2"/>
<evidence type="ECO:0000256" key="3">
    <source>
        <dbReference type="SAM" id="MobiDB-lite"/>
    </source>
</evidence>
<evidence type="ECO:0000305" key="4"/>
<evidence type="ECO:0000312" key="5">
    <source>
        <dbReference type="Proteomes" id="UP000001595"/>
    </source>
</evidence>